<sequence>MIFFNPVSFRLVRNILLNFDSTVMSKSSCGNTSINIVSNLIILLSTSSYDPNSGIDVSHALTTQITKKSHAPGYTLYKKLSFFSSVFF</sequence>
<dbReference type="EMBL" id="M35027">
    <property type="protein sequence ID" value="AAA48126.1"/>
    <property type="molecule type" value="Genomic_DNA"/>
</dbReference>
<dbReference type="PIR" id="I42523">
    <property type="entry name" value="I42523"/>
</dbReference>
<dbReference type="SMR" id="P20513"/>
<dbReference type="IntAct" id="P20513">
    <property type="interactions" value="1"/>
</dbReference>
<dbReference type="MINT" id="P20513"/>
<dbReference type="Proteomes" id="UP000008269">
    <property type="component" value="Segment"/>
</dbReference>
<accession>P20513</accession>
<organismHost>
    <name type="scientific">Homo sapiens</name>
    <name type="common">Human</name>
    <dbReference type="NCBI Taxonomy" id="9606"/>
</organismHost>
<feature type="chain" id="PRO_0000099645" description="Uncharacterized 9.8 kDa protein">
    <location>
        <begin position="1"/>
        <end position="88"/>
    </location>
</feature>
<proteinExistence type="predicted"/>
<protein>
    <recommendedName>
        <fullName>Uncharacterized 9.8 kDa protein</fullName>
    </recommendedName>
</protein>
<keyword id="KW-1185">Reference proteome</keyword>
<reference key="1">
    <citation type="journal article" date="1990" name="Virology">
        <title>The complete DNA sequence of vaccinia virus.</title>
        <authorList>
            <person name="Goebel S.J."/>
            <person name="Johnson G.P."/>
            <person name="Perkus M.E."/>
            <person name="Davis S.W."/>
            <person name="Winslow J.P."/>
            <person name="Paoletti E."/>
        </authorList>
    </citation>
    <scope>NUCLEOTIDE SEQUENCE [LARGE SCALE GENOMIC DNA]</scope>
</reference>
<reference key="2">
    <citation type="journal article" date="1990" name="Virology">
        <title>Appendix to 'The complete DNA sequence of vaccinia virus'.</title>
        <authorList>
            <person name="Goebel S.J."/>
            <person name="Johnson G.P."/>
            <person name="Perkus M.E."/>
            <person name="Davis S.W."/>
            <person name="Winslow J.P."/>
            <person name="Paoletti E."/>
        </authorList>
    </citation>
    <scope>COMPLETE GENOME</scope>
</reference>
<organism>
    <name type="scientific">Vaccinia virus (strain Copenhagen)</name>
    <name type="common">VACV</name>
    <dbReference type="NCBI Taxonomy" id="10249"/>
    <lineage>
        <taxon>Viruses</taxon>
        <taxon>Varidnaviria</taxon>
        <taxon>Bamfordvirae</taxon>
        <taxon>Nucleocytoviricota</taxon>
        <taxon>Pokkesviricetes</taxon>
        <taxon>Chitovirales</taxon>
        <taxon>Poxviridae</taxon>
        <taxon>Chordopoxvirinae</taxon>
        <taxon>Orthopoxvirus</taxon>
        <taxon>Vaccinia virus</taxon>
    </lineage>
</organism>
<name>YVAD_VACCC</name>
<gene>
    <name type="ORF">A ORF D</name>
</gene>